<sequence>MFVLIDNVLAYLLEQDDLFVTARFAIQGQIVSRRVNKIHISNITDVLLQQFISHTLPYNDNIVPKKILDSMRTAVRQLLEATACVSRECPLVKRSQDIKRARKRLLSDWYRLGADANMDAVLLVVNSAWRFLAVWRPFVNSIQHATQELYQNIAHYLLHGNVNIQRVTALLQLVMGQDDLLFSMDDVLQEVFRIQLYLNKMLPHNSHKWQKPSPFDSANLLLNFRDWTTDNALLQELLLSYPTINKNKHKNHSVPRLIQV</sequence>
<proteinExistence type="uncertain"/>
<protein>
    <recommendedName>
        <fullName>Putative uncharacterized protein YCL068C</fullName>
    </recommendedName>
</protein>
<dbReference type="EMBL" id="X59720">
    <property type="protein sequence ID" value="CAC42951.1"/>
    <property type="molecule type" value="Genomic_DNA"/>
</dbReference>
<dbReference type="EMBL" id="AY692673">
    <property type="protein sequence ID" value="AAT92692.1"/>
    <property type="molecule type" value="Genomic_DNA"/>
</dbReference>
<dbReference type="EMBL" id="BK006937">
    <property type="protein sequence ID" value="DAA07420.1"/>
    <property type="molecule type" value="Genomic_DNA"/>
</dbReference>
<dbReference type="PIR" id="S19399">
    <property type="entry name" value="S19399"/>
</dbReference>
<dbReference type="RefSeq" id="NP_009865.2">
    <property type="nucleotide sequence ID" value="NM_001178709.1"/>
</dbReference>
<dbReference type="SMR" id="P25593"/>
<dbReference type="BioGRID" id="30921">
    <property type="interactions" value="52"/>
</dbReference>
<dbReference type="FunCoup" id="P25593">
    <property type="interactions" value="19"/>
</dbReference>
<dbReference type="IntAct" id="P25593">
    <property type="interactions" value="1"/>
</dbReference>
<dbReference type="STRING" id="4932.YCL068C"/>
<dbReference type="PaxDb" id="4932-YCL068C"/>
<dbReference type="PeptideAtlas" id="P25593"/>
<dbReference type="EnsemblFungi" id="YCL068C_mRNA">
    <property type="protein sequence ID" value="YCL068C"/>
    <property type="gene ID" value="YCL068C"/>
</dbReference>
<dbReference type="GeneID" id="850291"/>
<dbReference type="KEGG" id="sce:YCL068C"/>
<dbReference type="AGR" id="SGD:S000000573"/>
<dbReference type="SGD" id="S000000573">
    <property type="gene designation" value="YCL068C"/>
</dbReference>
<dbReference type="VEuPathDB" id="FungiDB:YCL068C"/>
<dbReference type="HOGENOM" id="CLU_067633_0_0_1"/>
<dbReference type="InParanoid" id="P25593"/>
<dbReference type="OrthoDB" id="546434at2759"/>
<dbReference type="BioCyc" id="YEAST:G3O-29315-MONOMER"/>
<dbReference type="BioGRID-ORCS" id="850291">
    <property type="hits" value="0 hits in 10 CRISPR screens"/>
</dbReference>
<dbReference type="Proteomes" id="UP000002311">
    <property type="component" value="Chromosome III"/>
</dbReference>
<dbReference type="RNAct" id="P25593">
    <property type="molecule type" value="protein"/>
</dbReference>
<organism>
    <name type="scientific">Saccharomyces cerevisiae (strain ATCC 204508 / S288c)</name>
    <name type="common">Baker's yeast</name>
    <dbReference type="NCBI Taxonomy" id="559292"/>
    <lineage>
        <taxon>Eukaryota</taxon>
        <taxon>Fungi</taxon>
        <taxon>Dikarya</taxon>
        <taxon>Ascomycota</taxon>
        <taxon>Saccharomycotina</taxon>
        <taxon>Saccharomycetes</taxon>
        <taxon>Saccharomycetales</taxon>
        <taxon>Saccharomycetaceae</taxon>
        <taxon>Saccharomyces</taxon>
    </lineage>
</organism>
<reference key="1">
    <citation type="journal article" date="1992" name="Nature">
        <title>The complete DNA sequence of yeast chromosome III.</title>
        <authorList>
            <person name="Oliver S.G."/>
            <person name="van der Aart Q.J.M."/>
            <person name="Agostoni-Carbone M.L."/>
            <person name="Aigle M."/>
            <person name="Alberghina L."/>
            <person name="Alexandraki D."/>
            <person name="Antoine G."/>
            <person name="Anwar R."/>
            <person name="Ballesta J.P.G."/>
            <person name="Benit P."/>
            <person name="Berben G."/>
            <person name="Bergantino E."/>
            <person name="Biteau N."/>
            <person name="Bolle P.-A."/>
            <person name="Bolotin-Fukuhara M."/>
            <person name="Brown A."/>
            <person name="Brown A.J.P."/>
            <person name="Buhler J.-M."/>
            <person name="Carcano C."/>
            <person name="Carignani G."/>
            <person name="Cederberg H."/>
            <person name="Chanet R."/>
            <person name="Contreras R."/>
            <person name="Crouzet M."/>
            <person name="Daignan-Fornier B."/>
            <person name="Defoor E."/>
            <person name="Delgado M.D."/>
            <person name="Demolder J."/>
            <person name="Doira C."/>
            <person name="Dubois E."/>
            <person name="Dujon B."/>
            <person name="Duesterhoeft A."/>
            <person name="Erdmann D."/>
            <person name="Esteban M."/>
            <person name="Fabre F."/>
            <person name="Fairhead C."/>
            <person name="Faye G."/>
            <person name="Feldmann H."/>
            <person name="Fiers W."/>
            <person name="Francingues-Gaillard M.-C."/>
            <person name="Franco L."/>
            <person name="Frontali L."/>
            <person name="Fukuhara H."/>
            <person name="Fuller L.J."/>
            <person name="Galland P."/>
            <person name="Gent M.E."/>
            <person name="Gigot D."/>
            <person name="Gilliquet V."/>
            <person name="Glansdorff N."/>
            <person name="Goffeau A."/>
            <person name="Grenson M."/>
            <person name="Grisanti P."/>
            <person name="Grivell L.A."/>
            <person name="de Haan M."/>
            <person name="Haasemann M."/>
            <person name="Hatat D."/>
            <person name="Hoenicka J."/>
            <person name="Hegemann J.H."/>
            <person name="Herbert C.J."/>
            <person name="Hilger F."/>
            <person name="Hohmann S."/>
            <person name="Hollenberg C.P."/>
            <person name="Huse K."/>
            <person name="Iborra F."/>
            <person name="Indge K.J."/>
            <person name="Isono K."/>
            <person name="Jacq C."/>
            <person name="Jacquet M."/>
            <person name="James C.M."/>
            <person name="Jauniaux J.-C."/>
            <person name="Jia Y."/>
            <person name="Jimenez A."/>
            <person name="Kelly A."/>
            <person name="Kleinhans U."/>
            <person name="Kreisl P."/>
            <person name="Lanfranchi G."/>
            <person name="Lewis C."/>
            <person name="van der Linden C.G."/>
            <person name="Lucchini G."/>
            <person name="Lutzenkirchen K."/>
            <person name="Maat M.J."/>
            <person name="Mallet L."/>
            <person name="Mannhaupt G."/>
            <person name="Martegani E."/>
            <person name="Mathieu A."/>
            <person name="Maurer C.T.C."/>
            <person name="McConnell D."/>
            <person name="McKee R.A."/>
            <person name="Messenguy F."/>
            <person name="Mewes H.-W."/>
            <person name="Molemans F."/>
            <person name="Montague M.A."/>
            <person name="Muzi Falconi M."/>
            <person name="Navas L."/>
            <person name="Newlon C.S."/>
            <person name="Noone D."/>
            <person name="Pallier C."/>
            <person name="Panzeri L."/>
            <person name="Pearson B.M."/>
            <person name="Perea J."/>
            <person name="Philippsen P."/>
            <person name="Pierard A."/>
            <person name="Planta R.J."/>
            <person name="Plevani P."/>
            <person name="Poetsch B."/>
            <person name="Pohl F.M."/>
            <person name="Purnelle B."/>
            <person name="Ramezani Rad M."/>
            <person name="Rasmussen S.W."/>
            <person name="Raynal A."/>
            <person name="Remacha M.A."/>
            <person name="Richterich P."/>
            <person name="Roberts A.B."/>
            <person name="Rodriguez F."/>
            <person name="Sanz E."/>
            <person name="Schaaff-Gerstenschlaeger I."/>
            <person name="Scherens B."/>
            <person name="Schweitzer B."/>
            <person name="Shu Y."/>
            <person name="Skala J."/>
            <person name="Slonimski P.P."/>
            <person name="Sor F."/>
            <person name="Soustelle C."/>
            <person name="Spiegelberg R."/>
            <person name="Stateva L.I."/>
            <person name="Steensma H.Y."/>
            <person name="Steiner S."/>
            <person name="Thierry A."/>
            <person name="Thireos G."/>
            <person name="Tzermia M."/>
            <person name="Urrestarazu L.A."/>
            <person name="Valle G."/>
            <person name="Vetter I."/>
            <person name="van Vliet-Reedijk J.C."/>
            <person name="Voet M."/>
            <person name="Volckaert G."/>
            <person name="Vreken P."/>
            <person name="Wang H."/>
            <person name="Warmington J.R."/>
            <person name="von Wettstein D."/>
            <person name="Wicksteed B.L."/>
            <person name="Wilson C."/>
            <person name="Wurst H."/>
            <person name="Xu G."/>
            <person name="Yoshikawa A."/>
            <person name="Zimmermann F.K."/>
            <person name="Sgouros J.G."/>
        </authorList>
    </citation>
    <scope>NUCLEOTIDE SEQUENCE [LARGE SCALE GENOMIC DNA]</scope>
    <source>
        <strain>ATCC 204508 / S288c</strain>
    </source>
</reference>
<reference key="2">
    <citation type="submission" date="2001-06" db="EMBL/GenBank/DDBJ databases">
        <authorList>
            <person name="Valles G."/>
            <person name="Volckaerts G."/>
        </authorList>
    </citation>
    <scope>SEQUENCE REVISION TO N-TERMINUS AND 76</scope>
</reference>
<reference key="3">
    <citation type="journal article" date="2014" name="G3 (Bethesda)">
        <title>The reference genome sequence of Saccharomyces cerevisiae: Then and now.</title>
        <authorList>
            <person name="Engel S.R."/>
            <person name="Dietrich F.S."/>
            <person name="Fisk D.G."/>
            <person name="Binkley G."/>
            <person name="Balakrishnan R."/>
            <person name="Costanzo M.C."/>
            <person name="Dwight S.S."/>
            <person name="Hitz B.C."/>
            <person name="Karra K."/>
            <person name="Nash R.S."/>
            <person name="Weng S."/>
            <person name="Wong E.D."/>
            <person name="Lloyd P."/>
            <person name="Skrzypek M.S."/>
            <person name="Miyasato S.R."/>
            <person name="Simison M."/>
            <person name="Cherry J.M."/>
        </authorList>
    </citation>
    <scope>GENOME REANNOTATION</scope>
    <source>
        <strain>ATCC 204508 / S288c</strain>
    </source>
</reference>
<reference key="4">
    <citation type="journal article" date="2007" name="Genome Res.">
        <title>Approaching a complete repository of sequence-verified protein-encoding clones for Saccharomyces cerevisiae.</title>
        <authorList>
            <person name="Hu Y."/>
            <person name="Rolfs A."/>
            <person name="Bhullar B."/>
            <person name="Murthy T.V.S."/>
            <person name="Zhu C."/>
            <person name="Berger M.F."/>
            <person name="Camargo A.A."/>
            <person name="Kelley F."/>
            <person name="McCarron S."/>
            <person name="Jepson D."/>
            <person name="Richardson A."/>
            <person name="Raphael J."/>
            <person name="Moreira D."/>
            <person name="Taycher E."/>
            <person name="Zuo D."/>
            <person name="Mohr S."/>
            <person name="Kane M.F."/>
            <person name="Williamson J."/>
            <person name="Simpson A.J.G."/>
            <person name="Bulyk M.L."/>
            <person name="Harlow E."/>
            <person name="Marsischky G."/>
            <person name="Kolodner R.D."/>
            <person name="LaBaer J."/>
        </authorList>
    </citation>
    <scope>NUCLEOTIDE SEQUENCE [GENOMIC DNA] OF 71-260</scope>
    <source>
        <strain>ATCC 204508 / S288c</strain>
    </source>
</reference>
<feature type="chain" id="PRO_0000202556" description="Putative uncharacterized protein YCL068C">
    <location>
        <begin position="1"/>
        <end position="260"/>
    </location>
</feature>
<feature type="sequence conflict" description="In Ref. 4; AAT92692." evidence="1" ref="4">
    <original>R</original>
    <variation>P</variation>
    <location>
        <position position="76"/>
    </location>
</feature>
<comment type="caution">
    <text evidence="1">Could be the product of a pseudogene. Almost identical to BUD5 N-terminal.</text>
</comment>
<gene>
    <name type="ordered locus">YCL068C</name>
    <name type="ORF">YCL68C</name>
</gene>
<accession>P25593</accession>
<accession>D6VQV1</accession>
<accession>Q6B2Q7</accession>
<accession>Q8NIN4</accession>
<evidence type="ECO:0000305" key="1"/>
<name>YCG8_YEAST</name>
<keyword id="KW-1185">Reference proteome</keyword>